<organism>
    <name type="scientific">Pan troglodytes</name>
    <name type="common">Chimpanzee</name>
    <dbReference type="NCBI Taxonomy" id="9598"/>
    <lineage>
        <taxon>Eukaryota</taxon>
        <taxon>Metazoa</taxon>
        <taxon>Chordata</taxon>
        <taxon>Craniata</taxon>
        <taxon>Vertebrata</taxon>
        <taxon>Euteleostomi</taxon>
        <taxon>Mammalia</taxon>
        <taxon>Eutheria</taxon>
        <taxon>Euarchontoglires</taxon>
        <taxon>Primates</taxon>
        <taxon>Haplorrhini</taxon>
        <taxon>Catarrhini</taxon>
        <taxon>Hominidae</taxon>
        <taxon>Pan</taxon>
    </lineage>
</organism>
<evidence type="ECO:0000250" key="1">
    <source>
        <dbReference type="UniProtKB" id="P12838"/>
    </source>
</evidence>
<evidence type="ECO:0000250" key="2">
    <source>
        <dbReference type="UniProtKB" id="Q01523"/>
    </source>
</evidence>
<evidence type="ECO:0000255" key="3"/>
<evidence type="ECO:0000305" key="4"/>
<dbReference type="EMBL" id="AY746438">
    <property type="protein sequence ID" value="AAW78341.1"/>
    <property type="molecule type" value="mRNA"/>
</dbReference>
<dbReference type="RefSeq" id="NP_001029078.1">
    <property type="nucleotide sequence ID" value="NM_001033906.1"/>
</dbReference>
<dbReference type="RefSeq" id="XP_009453052.1">
    <property type="nucleotide sequence ID" value="XM_009454777.5"/>
</dbReference>
<dbReference type="SMR" id="Q5G862"/>
<dbReference type="FunCoup" id="Q5G862">
    <property type="interactions" value="209"/>
</dbReference>
<dbReference type="STRING" id="9598.ENSPTRP00000034186"/>
<dbReference type="Ensembl" id="ENSPTRT00000036991.2">
    <property type="protein sequence ID" value="ENSPTRP00000034186.1"/>
    <property type="gene ID" value="ENSPTRG00000034369.3"/>
</dbReference>
<dbReference type="GeneID" id="463971"/>
<dbReference type="KEGG" id="ptr:463971"/>
<dbReference type="CTD" id="1669"/>
<dbReference type="GeneTree" id="ENSGT00940000153268"/>
<dbReference type="InParanoid" id="Q5G862"/>
<dbReference type="OMA" id="CTCRLVY"/>
<dbReference type="OrthoDB" id="14242at9604"/>
<dbReference type="Proteomes" id="UP000002277">
    <property type="component" value="Chromosome 8"/>
</dbReference>
<dbReference type="Bgee" id="ENSPTRG00000034369">
    <property type="expression patterns" value="Expressed in bone marrow and 3 other cell types or tissues"/>
</dbReference>
<dbReference type="GO" id="GO:0042582">
    <property type="term" value="C:azurophil granule"/>
    <property type="evidence" value="ECO:0007669"/>
    <property type="project" value="Ensembl"/>
</dbReference>
<dbReference type="GO" id="GO:0005615">
    <property type="term" value="C:extracellular space"/>
    <property type="evidence" value="ECO:0000318"/>
    <property type="project" value="GO_Central"/>
</dbReference>
<dbReference type="GO" id="GO:0005796">
    <property type="term" value="C:Golgi lumen"/>
    <property type="evidence" value="ECO:0007669"/>
    <property type="project" value="UniProtKB-ARBA"/>
</dbReference>
<dbReference type="GO" id="GO:0030133">
    <property type="term" value="C:transport vesicle"/>
    <property type="evidence" value="ECO:0007669"/>
    <property type="project" value="UniProtKB-SubCell"/>
</dbReference>
<dbReference type="GO" id="GO:0042803">
    <property type="term" value="F:protein homodimerization activity"/>
    <property type="evidence" value="ECO:0007669"/>
    <property type="project" value="Ensembl"/>
</dbReference>
<dbReference type="GO" id="GO:0019731">
    <property type="term" value="P:antibacterial humoral response"/>
    <property type="evidence" value="ECO:0000318"/>
    <property type="project" value="GO_Central"/>
</dbReference>
<dbReference type="GO" id="GO:0019732">
    <property type="term" value="P:antifungal humoral response"/>
    <property type="evidence" value="ECO:0007669"/>
    <property type="project" value="Ensembl"/>
</dbReference>
<dbReference type="GO" id="GO:0061844">
    <property type="term" value="P:antimicrobial humoral immune response mediated by antimicrobial peptide"/>
    <property type="evidence" value="ECO:0000318"/>
    <property type="project" value="GO_Central"/>
</dbReference>
<dbReference type="GO" id="GO:0071222">
    <property type="term" value="P:cellular response to lipopolysaccharide"/>
    <property type="evidence" value="ECO:0000318"/>
    <property type="project" value="GO_Central"/>
</dbReference>
<dbReference type="GO" id="GO:0050829">
    <property type="term" value="P:defense response to Gram-negative bacterium"/>
    <property type="evidence" value="ECO:0000318"/>
    <property type="project" value="GO_Central"/>
</dbReference>
<dbReference type="GO" id="GO:0050830">
    <property type="term" value="P:defense response to Gram-positive bacterium"/>
    <property type="evidence" value="ECO:0000318"/>
    <property type="project" value="GO_Central"/>
</dbReference>
<dbReference type="GO" id="GO:0051673">
    <property type="term" value="P:disruption of plasma membrane integrity in another organism"/>
    <property type="evidence" value="ECO:0000318"/>
    <property type="project" value="GO_Central"/>
</dbReference>
<dbReference type="GO" id="GO:0002227">
    <property type="term" value="P:innate immune response in mucosa"/>
    <property type="evidence" value="ECO:0000318"/>
    <property type="project" value="GO_Central"/>
</dbReference>
<dbReference type="GO" id="GO:0031640">
    <property type="term" value="P:killing of cells of another organism"/>
    <property type="evidence" value="ECO:0007669"/>
    <property type="project" value="UniProtKB-KW"/>
</dbReference>
<dbReference type="InterPro" id="IPR016327">
    <property type="entry name" value="Alpha-defensin"/>
</dbReference>
<dbReference type="InterPro" id="IPR006081">
    <property type="entry name" value="Alpha-defensin_C"/>
</dbReference>
<dbReference type="InterPro" id="IPR002366">
    <property type="entry name" value="Alpha-defensin_N"/>
</dbReference>
<dbReference type="InterPro" id="IPR006080">
    <property type="entry name" value="Beta/alpha-defensin_C"/>
</dbReference>
<dbReference type="PANTHER" id="PTHR11876">
    <property type="entry name" value="ALPHA-DEFENSIN 1"/>
    <property type="match status" value="1"/>
</dbReference>
<dbReference type="PANTHER" id="PTHR11876:SF23">
    <property type="entry name" value="DEFENSIN ALPHA 4"/>
    <property type="match status" value="1"/>
</dbReference>
<dbReference type="Pfam" id="PF00323">
    <property type="entry name" value="Defensin_1"/>
    <property type="match status" value="1"/>
</dbReference>
<dbReference type="Pfam" id="PF00879">
    <property type="entry name" value="Defensin_propep"/>
    <property type="match status" value="1"/>
</dbReference>
<dbReference type="PIRSF" id="PIRSF001875">
    <property type="entry name" value="Alpha-defensin"/>
    <property type="match status" value="1"/>
</dbReference>
<dbReference type="SMART" id="SM01418">
    <property type="entry name" value="Defensin_propep"/>
    <property type="match status" value="1"/>
</dbReference>
<dbReference type="SMART" id="SM00048">
    <property type="entry name" value="DEFSN"/>
    <property type="match status" value="1"/>
</dbReference>
<dbReference type="PROSITE" id="PS00269">
    <property type="entry name" value="DEFENSIN"/>
    <property type="match status" value="1"/>
</dbReference>
<protein>
    <recommendedName>
        <fullName evidence="1">Defensin alpha 4</fullName>
    </recommendedName>
    <alternativeName>
        <fullName evidence="1">Corticostatin HP-4</fullName>
    </alternativeName>
    <alternativeName>
        <fullName evidence="1">HNP-4</fullName>
        <shortName evidence="1">HP-4</shortName>
    </alternativeName>
    <alternativeName>
        <fullName evidence="1">Neutrophil defensin 4</fullName>
    </alternativeName>
</protein>
<keyword id="KW-0044">Antibiotic</keyword>
<keyword id="KW-0929">Antimicrobial</keyword>
<keyword id="KW-0968">Cytoplasmic vesicle</keyword>
<keyword id="KW-0211">Defensin</keyword>
<keyword id="KW-1015">Disulfide bond</keyword>
<keyword id="KW-0295">Fungicide</keyword>
<keyword id="KW-1185">Reference proteome</keyword>
<keyword id="KW-0964">Secreted</keyword>
<keyword id="KW-0732">Signal</keyword>
<gene>
    <name type="primary">DEFA4</name>
</gene>
<sequence>MRIIAILAAILLVALQVRAGPLQARGDEAPGQEQRGPEDQDISISFAWDKSSALQVSGSTRGMVCSCRLVFCRRTELRVGNCLIGGVSFTYCCTRVD</sequence>
<name>DEF4_PANTR</name>
<feature type="signal peptide" evidence="3">
    <location>
        <begin position="1"/>
        <end position="19"/>
    </location>
</feature>
<feature type="propeptide" id="PRO_0000006784">
    <location>
        <begin position="20"/>
        <end position="63"/>
    </location>
</feature>
<feature type="peptide" id="PRO_0000006785" description="Defensin alpha 4" evidence="1">
    <location>
        <begin position="64"/>
        <end position="96"/>
    </location>
</feature>
<feature type="propeptide" id="PRO_0000455665">
    <location>
        <position position="97"/>
    </location>
</feature>
<feature type="disulfide bond" evidence="1">
    <location>
        <begin position="65"/>
        <end position="93"/>
    </location>
</feature>
<feature type="disulfide bond" evidence="1">
    <location>
        <begin position="67"/>
        <end position="82"/>
    </location>
</feature>
<feature type="disulfide bond" evidence="1">
    <location>
        <begin position="72"/>
        <end position="92"/>
    </location>
</feature>
<reference key="1">
    <citation type="journal article" date="2004" name="Physiol. Genomics">
        <title>Rapid evolution and diversification of mammalian alpha-defensins as revealed by comparative analysis of rodent and primate genes.</title>
        <authorList>
            <person name="Patil A."/>
            <person name="Hughes A.L."/>
            <person name="Zhang G."/>
        </authorList>
    </citation>
    <scope>NUCLEOTIDE SEQUENCE [MRNA]</scope>
</reference>
<proteinExistence type="inferred from homology"/>
<comment type="function">
    <text evidence="1">Host-defense peptide that has antimicrobial activity against Gram-negative bacteria, and to a lesser extent also against Gram-positive bacteria and fungi (By similarity). Exhibits antimicrobial activity against Gram-negative E.coli and E.aerogenes and Gram-positive S.faecalis, S.aureus and B.cereus and the yeast C.albicans (in vitro) (By similarity). Inhibits corticotropin (ACTH)-stimulated corticosterone production (in vitro) (By similarity). Inhibits enzymatic activity of B.anthracis lef/anthrax lethal factor (in vitro) (By similarity).</text>
</comment>
<comment type="subunit">
    <text evidence="1">Homodimer; homodimerization seems to be required for killing S.aureus, but not E.coli (By similarity). Interacts with CD4 (By similarity). Interacts with Bacillus anthracis lef; homodimerization is required for the interaction (By similarity).</text>
</comment>
<comment type="subcellular location">
    <subcellularLocation>
        <location evidence="2">Secreted</location>
    </subcellularLocation>
    <subcellularLocation>
        <location evidence="1">Cytoplasmic vesicle</location>
        <location evidence="1">Secretory vesicle</location>
    </subcellularLocation>
    <text evidence="1">Stored as mature peptide in neutrophil granules.</text>
</comment>
<comment type="PTM">
    <text evidence="1">The three-dimensional structure formed by the three intramolecular disulfide bridges is indispensable for effective bacterial killing.</text>
</comment>
<comment type="similarity">
    <text evidence="4">Belongs to the alpha-defensin family.</text>
</comment>
<accession>Q5G862</accession>